<accession>P56532</accession>
<proteinExistence type="evidence at protein level"/>
<protein>
    <recommendedName>
        <fullName>Globin</fullName>
    </recommendedName>
    <alternativeName>
        <fullName>Myoglobin</fullName>
    </alternativeName>
</protein>
<name>GLB_DICDE</name>
<comment type="function">
    <text>Oxygen binding protein.</text>
</comment>
<comment type="subunit">
    <text>Monomer.</text>
</comment>
<comment type="miscellaneous">
    <text evidence="1">This globin lacks one of the heme-binding histidine residues found in most other globins (replaced by a tyrosine) but has a high oxygen affinity despite this change.</text>
</comment>
<comment type="similarity">
    <text evidence="2">Belongs to the globin family.</text>
</comment>
<evidence type="ECO:0000250" key="1"/>
<evidence type="ECO:0000255" key="2">
    <source>
        <dbReference type="PROSITE-ProRule" id="PRU00238"/>
    </source>
</evidence>
<evidence type="ECO:0000269" key="3">
    <source ref="1"/>
</evidence>
<evidence type="ECO:0000305" key="4"/>
<sequence>MAPLTAAEVSSLLAELGPHAETQEKKEALGVSAYRALFGAKPEYINLFSKLQGLTIDNVFIKYYGGTLVTTRNVNKQQFLSGEPIFVDFFKKMQKLLHHIFPIAGIHAL</sequence>
<dbReference type="SMR" id="P56532"/>
<dbReference type="GO" id="GO:0020037">
    <property type="term" value="F:heme binding"/>
    <property type="evidence" value="ECO:0007669"/>
    <property type="project" value="InterPro"/>
</dbReference>
<dbReference type="GO" id="GO:0046872">
    <property type="term" value="F:metal ion binding"/>
    <property type="evidence" value="ECO:0007669"/>
    <property type="project" value="UniProtKB-KW"/>
</dbReference>
<dbReference type="GO" id="GO:0019825">
    <property type="term" value="F:oxygen binding"/>
    <property type="evidence" value="ECO:0007669"/>
    <property type="project" value="InterPro"/>
</dbReference>
<dbReference type="GO" id="GO:0005344">
    <property type="term" value="F:oxygen carrier activity"/>
    <property type="evidence" value="ECO:0007669"/>
    <property type="project" value="UniProtKB-KW"/>
</dbReference>
<dbReference type="Gene3D" id="1.10.490.10">
    <property type="entry name" value="Globins"/>
    <property type="match status" value="1"/>
</dbReference>
<dbReference type="InterPro" id="IPR000971">
    <property type="entry name" value="Globin"/>
</dbReference>
<dbReference type="InterPro" id="IPR009050">
    <property type="entry name" value="Globin-like_sf"/>
</dbReference>
<dbReference type="InterPro" id="IPR012292">
    <property type="entry name" value="Globin/Proto"/>
</dbReference>
<dbReference type="SUPFAM" id="SSF46458">
    <property type="entry name" value="Globin-like"/>
    <property type="match status" value="1"/>
</dbReference>
<dbReference type="PROSITE" id="PS01033">
    <property type="entry name" value="GLOBIN"/>
    <property type="match status" value="1"/>
</dbReference>
<reference key="1">
    <citation type="thesis" date="1975" institute="University of Zurich" country="Switzerland">
        <authorList>
            <person name="Kunz P.A."/>
        </authorList>
    </citation>
    <scope>PROTEIN SEQUENCE OF 2-109</scope>
    <scope>CHARACTERIZATION</scope>
</reference>
<feature type="initiator methionine" description="Removed" evidence="3">
    <location>
        <position position="1"/>
    </location>
</feature>
<feature type="chain" id="PRO_0000052464" description="Globin">
    <location>
        <begin position="2"/>
        <end position="109"/>
    </location>
</feature>
<feature type="domain" description="Globin" evidence="2">
    <location>
        <begin position="3"/>
        <end position="109"/>
    </location>
</feature>
<feature type="non-consecutive residues" evidence="4">
    <location>
        <begin position="59"/>
        <end position="60"/>
    </location>
</feature>
<feature type="non-consecutive residues" evidence="4">
    <location>
        <begin position="60"/>
        <end position="61"/>
    </location>
</feature>
<feature type="non-consecutive residues" evidence="4">
    <location>
        <begin position="69"/>
        <end position="70"/>
    </location>
</feature>
<feature type="non-consecutive residues" evidence="4">
    <location>
        <begin position="92"/>
        <end position="93"/>
    </location>
</feature>
<keyword id="KW-0903">Direct protein sequencing</keyword>
<keyword id="KW-0349">Heme</keyword>
<keyword id="KW-0408">Iron</keyword>
<keyword id="KW-0479">Metal-binding</keyword>
<keyword id="KW-0561">Oxygen transport</keyword>
<keyword id="KW-0813">Transport</keyword>
<organism>
    <name type="scientific">Dicrocoelium dendriticum</name>
    <name type="common">Small liver fluke</name>
    <dbReference type="NCBI Taxonomy" id="57078"/>
    <lineage>
        <taxon>Eukaryota</taxon>
        <taxon>Metazoa</taxon>
        <taxon>Spiralia</taxon>
        <taxon>Lophotrochozoa</taxon>
        <taxon>Platyhelminthes</taxon>
        <taxon>Trematoda</taxon>
        <taxon>Digenea</taxon>
        <taxon>Plagiorchiida</taxon>
        <taxon>Xiphidiata</taxon>
        <taxon>Gorgoderoidea</taxon>
        <taxon>Dicrocoeliidae</taxon>
        <taxon>Dicrocoelium</taxon>
    </lineage>
</organism>